<evidence type="ECO:0000255" key="1">
    <source>
        <dbReference type="HAMAP-Rule" id="MF_01325"/>
    </source>
</evidence>
<evidence type="ECO:0000256" key="2">
    <source>
        <dbReference type="SAM" id="MobiDB-lite"/>
    </source>
</evidence>
<evidence type="ECO:0000305" key="3"/>
<name>RL3_GEOKA</name>
<proteinExistence type="inferred from homology"/>
<sequence length="213" mass="23219">MTKGILGRKIGMTQIFAENGDLIPVTVIHATPNVVLQKKTIENDGYEAIQLGFEDISEKRANKPQIGHAAKANTAPKRFIREIRGANIDEYEVGQEVKVDIFSEGEIVDVTGISKGKGFQGAIKRHGQSRGPMAHGSRYHRRPGSMGSIAPNRVFKTKNLPGRMGGERVTIQNLKIVKVDPERNLLLIKGNVPGPRKGLVIVKSAVKAAKKAK</sequence>
<protein>
    <recommendedName>
        <fullName evidence="1">Large ribosomal subunit protein uL3</fullName>
    </recommendedName>
    <alternativeName>
        <fullName evidence="3">50S ribosomal protein L3</fullName>
    </alternativeName>
</protein>
<reference key="1">
    <citation type="journal article" date="2004" name="Nucleic Acids Res.">
        <title>Thermoadaptation trait revealed by the genome sequence of thermophilic Geobacillus kaustophilus.</title>
        <authorList>
            <person name="Takami H."/>
            <person name="Takaki Y."/>
            <person name="Chee G.-J."/>
            <person name="Nishi S."/>
            <person name="Shimamura S."/>
            <person name="Suzuki H."/>
            <person name="Matsui S."/>
            <person name="Uchiyama I."/>
        </authorList>
    </citation>
    <scope>NUCLEOTIDE SEQUENCE [LARGE SCALE GENOMIC DNA]</scope>
    <source>
        <strain>HTA426</strain>
    </source>
</reference>
<gene>
    <name evidence="1" type="primary">rplC</name>
    <name type="ordered locus">GK0106</name>
</gene>
<organism>
    <name type="scientific">Geobacillus kaustophilus (strain HTA426)</name>
    <dbReference type="NCBI Taxonomy" id="235909"/>
    <lineage>
        <taxon>Bacteria</taxon>
        <taxon>Bacillati</taxon>
        <taxon>Bacillota</taxon>
        <taxon>Bacilli</taxon>
        <taxon>Bacillales</taxon>
        <taxon>Anoxybacillaceae</taxon>
        <taxon>Geobacillus</taxon>
        <taxon>Geobacillus thermoleovorans group</taxon>
    </lineage>
</organism>
<comment type="function">
    <text evidence="1">One of the primary rRNA binding proteins, it binds directly near the 3'-end of the 23S rRNA, where it nucleates assembly of the 50S subunit.</text>
</comment>
<comment type="subunit">
    <text evidence="1">Part of the 50S ribosomal subunit. Forms a cluster with proteins L14 and L19.</text>
</comment>
<comment type="similarity">
    <text evidence="1">Belongs to the universal ribosomal protein uL3 family.</text>
</comment>
<keyword id="KW-1185">Reference proteome</keyword>
<keyword id="KW-0687">Ribonucleoprotein</keyword>
<keyword id="KW-0689">Ribosomal protein</keyword>
<keyword id="KW-0694">RNA-binding</keyword>
<keyword id="KW-0699">rRNA-binding</keyword>
<feature type="chain" id="PRO_0000241348" description="Large ribosomal subunit protein uL3">
    <location>
        <begin position="1"/>
        <end position="213"/>
    </location>
</feature>
<feature type="region of interest" description="Disordered" evidence="2">
    <location>
        <begin position="124"/>
        <end position="151"/>
    </location>
</feature>
<dbReference type="EMBL" id="BA000043">
    <property type="protein sequence ID" value="BAD74391.1"/>
    <property type="molecule type" value="Genomic_DNA"/>
</dbReference>
<dbReference type="RefSeq" id="WP_011229620.1">
    <property type="nucleotide sequence ID" value="NC_006510.1"/>
</dbReference>
<dbReference type="SMR" id="Q5L3Z7"/>
<dbReference type="STRING" id="235909.GK0106"/>
<dbReference type="GeneID" id="32062094"/>
<dbReference type="KEGG" id="gka:GK0106"/>
<dbReference type="eggNOG" id="COG0087">
    <property type="taxonomic scope" value="Bacteria"/>
</dbReference>
<dbReference type="HOGENOM" id="CLU_044142_4_1_9"/>
<dbReference type="Proteomes" id="UP000001172">
    <property type="component" value="Chromosome"/>
</dbReference>
<dbReference type="GO" id="GO:0022625">
    <property type="term" value="C:cytosolic large ribosomal subunit"/>
    <property type="evidence" value="ECO:0007669"/>
    <property type="project" value="TreeGrafter"/>
</dbReference>
<dbReference type="GO" id="GO:0019843">
    <property type="term" value="F:rRNA binding"/>
    <property type="evidence" value="ECO:0007669"/>
    <property type="project" value="UniProtKB-UniRule"/>
</dbReference>
<dbReference type="GO" id="GO:0003735">
    <property type="term" value="F:structural constituent of ribosome"/>
    <property type="evidence" value="ECO:0007669"/>
    <property type="project" value="InterPro"/>
</dbReference>
<dbReference type="GO" id="GO:0006412">
    <property type="term" value="P:translation"/>
    <property type="evidence" value="ECO:0007669"/>
    <property type="project" value="UniProtKB-UniRule"/>
</dbReference>
<dbReference type="FunFam" id="2.40.30.10:FF:000004">
    <property type="entry name" value="50S ribosomal protein L3"/>
    <property type="match status" value="1"/>
</dbReference>
<dbReference type="FunFam" id="3.30.160.810:FF:000002">
    <property type="entry name" value="50S ribosomal protein L3"/>
    <property type="match status" value="1"/>
</dbReference>
<dbReference type="Gene3D" id="3.30.160.810">
    <property type="match status" value="1"/>
</dbReference>
<dbReference type="Gene3D" id="2.40.30.10">
    <property type="entry name" value="Translation factors"/>
    <property type="match status" value="1"/>
</dbReference>
<dbReference type="HAMAP" id="MF_01325_B">
    <property type="entry name" value="Ribosomal_uL3_B"/>
    <property type="match status" value="1"/>
</dbReference>
<dbReference type="InterPro" id="IPR000597">
    <property type="entry name" value="Ribosomal_uL3"/>
</dbReference>
<dbReference type="InterPro" id="IPR019927">
    <property type="entry name" value="Ribosomal_uL3_bac/org-type"/>
</dbReference>
<dbReference type="InterPro" id="IPR019926">
    <property type="entry name" value="Ribosomal_uL3_CS"/>
</dbReference>
<dbReference type="InterPro" id="IPR009000">
    <property type="entry name" value="Transl_B-barrel_sf"/>
</dbReference>
<dbReference type="NCBIfam" id="TIGR03625">
    <property type="entry name" value="L3_bact"/>
    <property type="match status" value="1"/>
</dbReference>
<dbReference type="PANTHER" id="PTHR11229">
    <property type="entry name" value="50S RIBOSOMAL PROTEIN L3"/>
    <property type="match status" value="1"/>
</dbReference>
<dbReference type="PANTHER" id="PTHR11229:SF16">
    <property type="entry name" value="LARGE RIBOSOMAL SUBUNIT PROTEIN UL3C"/>
    <property type="match status" value="1"/>
</dbReference>
<dbReference type="Pfam" id="PF00297">
    <property type="entry name" value="Ribosomal_L3"/>
    <property type="match status" value="1"/>
</dbReference>
<dbReference type="SUPFAM" id="SSF50447">
    <property type="entry name" value="Translation proteins"/>
    <property type="match status" value="1"/>
</dbReference>
<dbReference type="PROSITE" id="PS00474">
    <property type="entry name" value="RIBOSOMAL_L3"/>
    <property type="match status" value="1"/>
</dbReference>
<accession>Q5L3Z7</accession>